<protein>
    <recommendedName>
        <fullName>Keratin-associated protein 1-1</fullName>
    </recommendedName>
    <alternativeName>
        <fullName>High sulfur keratin-associated protein 1.1</fullName>
    </alternativeName>
    <alternativeName>
        <fullName>Keratin-associated protein 1.1</fullName>
    </alternativeName>
    <alternativeName>
        <fullName>Keratin-associated protein 1.6</fullName>
    </alternativeName>
    <alternativeName>
        <fullName>Keratin-associated protein 1.7</fullName>
    </alternativeName>
</protein>
<dbReference type="EMBL" id="X63337">
    <property type="protein sequence ID" value="CAA44937.1"/>
    <property type="molecule type" value="Genomic_DNA"/>
</dbReference>
<dbReference type="EMBL" id="AJ406926">
    <property type="protein sequence ID" value="CAC27565.1"/>
    <property type="molecule type" value="mRNA"/>
</dbReference>
<dbReference type="EMBL" id="AB052934">
    <property type="protein sequence ID" value="BAB61026.1"/>
    <property type="molecule type" value="mRNA"/>
</dbReference>
<dbReference type="EMBL" id="AB052868">
    <property type="protein sequence ID" value="BAB61024.1"/>
    <property type="molecule type" value="mRNA"/>
</dbReference>
<dbReference type="EMBL" id="AB055057">
    <property type="protein sequence ID" value="BAB61031.1"/>
    <property type="molecule type" value="mRNA"/>
</dbReference>
<dbReference type="EMBL" id="AC007455">
    <property type="status" value="NOT_ANNOTATED_CDS"/>
    <property type="molecule type" value="Genomic_DNA"/>
</dbReference>
<dbReference type="EMBL" id="CH471152">
    <property type="protein sequence ID" value="EAW60699.1"/>
    <property type="molecule type" value="Genomic_DNA"/>
</dbReference>
<dbReference type="EMBL" id="BC105069">
    <property type="protein sequence ID" value="AAI05070.1"/>
    <property type="molecule type" value="mRNA"/>
</dbReference>
<dbReference type="EMBL" id="BC105071">
    <property type="protein sequence ID" value="AAI05072.1"/>
    <property type="molecule type" value="mRNA"/>
</dbReference>
<dbReference type="CCDS" id="CCDS42324.1"/>
<dbReference type="PIR" id="S37650">
    <property type="entry name" value="S37650"/>
</dbReference>
<dbReference type="RefSeq" id="NP_112229.1">
    <property type="nucleotide sequence ID" value="NM_030967.3"/>
</dbReference>
<dbReference type="BioGRID" id="123602">
    <property type="interactions" value="218"/>
</dbReference>
<dbReference type="FunCoup" id="Q07627">
    <property type="interactions" value="44"/>
</dbReference>
<dbReference type="IntAct" id="Q07627">
    <property type="interactions" value="185"/>
</dbReference>
<dbReference type="STRING" id="9606.ENSP00000305975"/>
<dbReference type="BioMuta" id="KRTAP1-1"/>
<dbReference type="DMDM" id="74722292"/>
<dbReference type="jPOST" id="Q07627"/>
<dbReference type="MassIVE" id="Q07627"/>
<dbReference type="PaxDb" id="9606-ENSP00000305975"/>
<dbReference type="PeptideAtlas" id="Q07627"/>
<dbReference type="ProteomicsDB" id="58521"/>
<dbReference type="Antibodypedia" id="55337">
    <property type="antibodies" value="48 antibodies from 8 providers"/>
</dbReference>
<dbReference type="DNASU" id="81851"/>
<dbReference type="Ensembl" id="ENST00000306271.5">
    <property type="protein sequence ID" value="ENSP00000305975.4"/>
    <property type="gene ID" value="ENSG00000188581.9"/>
</dbReference>
<dbReference type="Ensembl" id="ENST00000573871.1">
    <property type="protein sequence ID" value="ENSP00000460787.1"/>
    <property type="gene ID" value="ENSG00000262808.2"/>
</dbReference>
<dbReference type="GeneID" id="81851"/>
<dbReference type="KEGG" id="hsa:81851"/>
<dbReference type="MANE-Select" id="ENST00000306271.5">
    <property type="protein sequence ID" value="ENSP00000305975.4"/>
    <property type="RefSeq nucleotide sequence ID" value="NM_030967.3"/>
    <property type="RefSeq protein sequence ID" value="NP_112229.1"/>
</dbReference>
<dbReference type="UCSC" id="uc032fzn.1">
    <property type="organism name" value="human"/>
</dbReference>
<dbReference type="AGR" id="HGNC:16772"/>
<dbReference type="CTD" id="81851"/>
<dbReference type="DisGeNET" id="81851"/>
<dbReference type="GeneCards" id="KRTAP1-1"/>
<dbReference type="HGNC" id="HGNC:16772">
    <property type="gene designation" value="KRTAP1-1"/>
</dbReference>
<dbReference type="HPA" id="ENSG00000188581">
    <property type="expression patterns" value="Tissue enriched (skin)"/>
</dbReference>
<dbReference type="MIM" id="608819">
    <property type="type" value="gene"/>
</dbReference>
<dbReference type="neXtProt" id="NX_Q07627"/>
<dbReference type="OpenTargets" id="ENSG00000188581"/>
<dbReference type="PharmGKB" id="PA38412"/>
<dbReference type="VEuPathDB" id="HostDB:ENSG00000188581"/>
<dbReference type="eggNOG" id="KOG4726">
    <property type="taxonomic scope" value="Eukaryota"/>
</dbReference>
<dbReference type="GeneTree" id="ENSGT00940000160443"/>
<dbReference type="HOGENOM" id="CLU_109417_0_0_1"/>
<dbReference type="InParanoid" id="Q07627"/>
<dbReference type="OMA" id="CCYCSEP"/>
<dbReference type="PAN-GO" id="Q07627">
    <property type="GO annotations" value="0 GO annotations based on evolutionary models"/>
</dbReference>
<dbReference type="PhylomeDB" id="Q07627"/>
<dbReference type="TreeFam" id="TF351356"/>
<dbReference type="PathwayCommons" id="Q07627"/>
<dbReference type="Reactome" id="R-HSA-6805567">
    <property type="pathway name" value="Keratinization"/>
</dbReference>
<dbReference type="SignaLink" id="Q07627"/>
<dbReference type="BioGRID-ORCS" id="81851">
    <property type="hits" value="11 hits in 1066 CRISPR screens"/>
</dbReference>
<dbReference type="GenomeRNAi" id="81851"/>
<dbReference type="Pharos" id="Q07627">
    <property type="development level" value="Tdark"/>
</dbReference>
<dbReference type="PRO" id="PR:Q07627"/>
<dbReference type="Proteomes" id="UP000005640">
    <property type="component" value="Chromosome 17"/>
</dbReference>
<dbReference type="RNAct" id="Q07627">
    <property type="molecule type" value="protein"/>
</dbReference>
<dbReference type="Bgee" id="ENSG00000188581">
    <property type="expression patterns" value="Expressed in male germ line stem cell (sensu Vertebrata) in testis and 44 other cell types or tissues"/>
</dbReference>
<dbReference type="GO" id="GO:0005829">
    <property type="term" value="C:cytosol"/>
    <property type="evidence" value="ECO:0000304"/>
    <property type="project" value="Reactome"/>
</dbReference>
<dbReference type="GO" id="GO:0045095">
    <property type="term" value="C:keratin filament"/>
    <property type="evidence" value="ECO:0007669"/>
    <property type="project" value="InterPro"/>
</dbReference>
<dbReference type="InterPro" id="IPR002494">
    <property type="entry name" value="KAP"/>
</dbReference>
<dbReference type="Pfam" id="PF01500">
    <property type="entry name" value="Keratin_B2"/>
    <property type="match status" value="2"/>
</dbReference>
<comment type="function">
    <text>In the hair cortex, hair keratin intermediate filaments are embedded in an interfilamentous matrix, consisting of hair keratin-associated proteins (KRTAP), which are essential for the formation of a rigid and resistant hair shaft through their extensive disulfide bond cross-linking with abundant cysteine residues of hair keratins. The matrix proteins include the high-sulfur and high-glycine-tyrosine keratins.</text>
</comment>
<comment type="subunit">
    <text evidence="1">Interacts with hair keratins.</text>
</comment>
<comment type="interaction">
    <interactant intactId="EBI-11959885">
        <id>Q07627</id>
    </interactant>
    <interactant intactId="EBI-12006944">
        <id>O43184-4</id>
        <label>ADAM12</label>
    </interactant>
    <organismsDiffer>false</organismsDiffer>
    <experiments>3</experiments>
</comment>
<comment type="interaction">
    <interactant intactId="EBI-11959885">
        <id>Q07627</id>
    </interactant>
    <interactant intactId="EBI-10221726">
        <id>P82987</id>
        <label>ADAMTSL3</label>
    </interactant>
    <organismsDiffer>false</organismsDiffer>
    <experiments>3</experiments>
</comment>
<comment type="interaction">
    <interactant intactId="EBI-11959885">
        <id>Q07627</id>
    </interactant>
    <interactant intactId="EBI-10173507">
        <id>Q6UY14-3</id>
        <label>ADAMTSL4</label>
    </interactant>
    <organismsDiffer>false</organismsDiffer>
    <experiments>3</experiments>
</comment>
<comment type="interaction">
    <interactant intactId="EBI-11959885">
        <id>Q07627</id>
    </interactant>
    <interactant intactId="EBI-727098">
        <id>P21549</id>
        <label>AGXT</label>
    </interactant>
    <organismsDiffer>false</organismsDiffer>
    <experiments>3</experiments>
</comment>
<comment type="interaction">
    <interactant intactId="EBI-11959885">
        <id>Q07627</id>
    </interactant>
    <interactant intactId="EBI-748869">
        <id>O95154</id>
        <label>AKR7A3</label>
    </interactant>
    <organismsDiffer>false</organismsDiffer>
    <experiments>3</experiments>
</comment>
<comment type="interaction">
    <interactant intactId="EBI-11959885">
        <id>Q07627</id>
    </interactant>
    <interactant intactId="EBI-2558314">
        <id>P43353</id>
        <label>ALDH3B1</label>
    </interactant>
    <organismsDiffer>false</organismsDiffer>
    <experiments>3</experiments>
</comment>
<comment type="interaction">
    <interactant intactId="EBI-11959885">
        <id>Q07627</id>
    </interactant>
    <interactant intactId="EBI-1211484">
        <id>P05187</id>
        <label>ALPP</label>
    </interactant>
    <organismsDiffer>false</organismsDiffer>
    <experiments>3</experiments>
</comment>
<comment type="interaction">
    <interactant intactId="EBI-11959885">
        <id>Q07627</id>
    </interactant>
    <interactant intactId="EBI-745213">
        <id>P29972</id>
        <label>AQP1</label>
    </interactant>
    <organismsDiffer>false</organismsDiffer>
    <experiments>3</experiments>
</comment>
<comment type="interaction">
    <interactant intactId="EBI-11959885">
        <id>Q07627</id>
    </interactant>
    <interactant intactId="EBI-1993677">
        <id>Q9BZE9</id>
        <label>ASPSCR1</label>
    </interactant>
    <organismsDiffer>false</organismsDiffer>
    <experiments>3</experiments>
</comment>
<comment type="interaction">
    <interactant intactId="EBI-11959885">
        <id>Q07627</id>
    </interactant>
    <interactant intactId="EBI-12006308">
        <id>Q7Z3C6-3</id>
        <label>ATG9A</label>
    </interactant>
    <organismsDiffer>false</organismsDiffer>
    <experiments>3</experiments>
</comment>
<comment type="interaction">
    <interactant intactId="EBI-11959885">
        <id>Q07627</id>
    </interactant>
    <interactant intactId="EBI-10212133">
        <id>P50895</id>
        <label>BCAM</label>
    </interactant>
    <organismsDiffer>false</organismsDiffer>
    <experiments>3</experiments>
</comment>
<comment type="interaction">
    <interactant intactId="EBI-11959885">
        <id>Q07627</id>
    </interactant>
    <interactant intactId="EBI-744052">
        <id>Q5T681</id>
        <label>C10orf62</label>
    </interactant>
    <organismsDiffer>false</organismsDiffer>
    <experiments>3</experiments>
</comment>
<comment type="interaction">
    <interactant intactId="EBI-11959885">
        <id>Q07627</id>
    </interactant>
    <interactant intactId="EBI-6660291">
        <id>Q6NUJ2</id>
        <label>C11orf87</label>
    </interactant>
    <organismsDiffer>false</organismsDiffer>
    <experiments>3</experiments>
</comment>
<comment type="interaction">
    <interactant intactId="EBI-11959885">
        <id>Q07627</id>
    </interactant>
    <interactant intactId="EBI-11523526">
        <id>Q13554-3</id>
        <label>CAMK2B</label>
    </interactant>
    <organismsDiffer>false</organismsDiffer>
    <experiments>3</experiments>
</comment>
<comment type="interaction">
    <interactant intactId="EBI-11959885">
        <id>Q07627</id>
    </interactant>
    <interactant intactId="EBI-10258233">
        <id>Q7Z7H3</id>
        <label>CATIP</label>
    </interactant>
    <organismsDiffer>false</organismsDiffer>
    <experiments>3</experiments>
</comment>
<comment type="interaction">
    <interactant intactId="EBI-11959885">
        <id>Q07627</id>
    </interactant>
    <interactant intactId="EBI-744545">
        <id>Q8NEC5</id>
        <label>CATSPER1</label>
    </interactant>
    <organismsDiffer>false</organismsDiffer>
    <experiments>3</experiments>
</comment>
<comment type="interaction">
    <interactant intactId="EBI-11959885">
        <id>Q07627</id>
    </interactant>
    <interactant intactId="EBI-10254587">
        <id>Q6UXG3</id>
        <label>CD300LG</label>
    </interactant>
    <organismsDiffer>false</organismsDiffer>
    <experiments>3</experiments>
</comment>
<comment type="interaction">
    <interactant intactId="EBI-11959885">
        <id>Q07627</id>
    </interactant>
    <interactant intactId="EBI-10274247">
        <id>Q8TCT0</id>
        <label>CERK</label>
    </interactant>
    <organismsDiffer>false</organismsDiffer>
    <experiments>3</experiments>
</comment>
<comment type="interaction">
    <interactant intactId="EBI-11959885">
        <id>Q07627</id>
    </interactant>
    <interactant intactId="EBI-741528">
        <id>Q9UKJ5</id>
        <label>CHIC2</label>
    </interactant>
    <organismsDiffer>false</organismsDiffer>
    <experiments>3</experiments>
</comment>
<comment type="interaction">
    <interactant intactId="EBI-11959885">
        <id>Q07627</id>
    </interactant>
    <interactant intactId="EBI-947551">
        <id>Q9H2X0</id>
        <label>CHRD</label>
    </interactant>
    <organismsDiffer>false</organismsDiffer>
    <experiments>3</experiments>
</comment>
<comment type="interaction">
    <interactant intactId="EBI-11959885">
        <id>Q07627</id>
    </interactant>
    <interactant intactId="EBI-11979451">
        <id>P07510-2</id>
        <label>CHRNG</label>
    </interactant>
    <organismsDiffer>false</organismsDiffer>
    <experiments>3</experiments>
</comment>
<comment type="interaction">
    <interactant intactId="EBI-11959885">
        <id>Q07627</id>
    </interactant>
    <interactant intactId="EBI-751440">
        <id>P57739</id>
        <label>CLDN2</label>
    </interactant>
    <organismsDiffer>false</organismsDiffer>
    <experiments>3</experiments>
</comment>
<comment type="interaction">
    <interactant intactId="EBI-11959885">
        <id>Q07627</id>
    </interactant>
    <interactant intactId="EBI-741032">
        <id>Q8NE01</id>
        <label>CNNM3</label>
    </interactant>
    <organismsDiffer>false</organismsDiffer>
    <experiments>3</experiments>
</comment>
<comment type="interaction">
    <interactant intactId="EBI-11959885">
        <id>Q07627</id>
    </interactant>
    <interactant intactId="EBI-2212355">
        <id>Q49AN0</id>
        <label>CRY2</label>
    </interactant>
    <organismsDiffer>false</organismsDiffer>
    <experiments>3</experiments>
</comment>
<comment type="interaction">
    <interactant intactId="EBI-11959885">
        <id>Q07627</id>
    </interactant>
    <interactant intactId="EBI-2872294">
        <id>P09603</id>
        <label>CSF1</label>
    </interactant>
    <organismsDiffer>false</organismsDiffer>
    <experiments>3</experiments>
</comment>
<comment type="interaction">
    <interactant intactId="EBI-11959885">
        <id>Q07627</id>
    </interactant>
    <interactant intactId="EBI-8832659">
        <id>P09228</id>
        <label>CST2</label>
    </interactant>
    <organismsDiffer>false</organismsDiffer>
    <experiments>3</experiments>
</comment>
<comment type="interaction">
    <interactant intactId="EBI-11959885">
        <id>Q07627</id>
    </interactant>
    <interactant intactId="EBI-10295404">
        <id>Q99895</id>
        <label>CTRC</label>
    </interactant>
    <organismsDiffer>false</organismsDiffer>
    <experiments>3</experiments>
</comment>
<comment type="interaction">
    <interactant intactId="EBI-11959885">
        <id>Q07627</id>
    </interactant>
    <interactant intactId="EBI-8636823">
        <id>Q9UBR2</id>
        <label>CTSZ</label>
    </interactant>
    <organismsDiffer>false</organismsDiffer>
    <experiments>3</experiments>
</comment>
<comment type="interaction">
    <interactant intactId="EBI-11959885">
        <id>Q07627</id>
    </interactant>
    <interactant intactId="EBI-3843579">
        <id>Q9NS75</id>
        <label>CYSLTR2</label>
    </interactant>
    <organismsDiffer>false</organismsDiffer>
    <experiments>3</experiments>
</comment>
<comment type="interaction">
    <interactant intactId="EBI-11959885">
        <id>Q07627</id>
    </interactant>
    <interactant intactId="EBI-3867333">
        <id>A8MQ03</id>
        <label>CYSRT1</label>
    </interactant>
    <organismsDiffer>false</organismsDiffer>
    <experiments>3</experiments>
</comment>
<comment type="interaction">
    <interactant intactId="EBI-11959885">
        <id>Q07627</id>
    </interactant>
    <interactant intactId="EBI-746300">
        <id>Q96LJ7</id>
        <label>DHRS1</label>
    </interactant>
    <organismsDiffer>false</organismsDiffer>
    <experiments>3</experiments>
</comment>
<comment type="interaction">
    <interactant intactId="EBI-11959885">
        <id>Q07627</id>
    </interactant>
    <interactant intactId="EBI-9679045">
        <id>Q9NQL9</id>
        <label>DMRT3</label>
    </interactant>
    <organismsDiffer>false</organismsDiffer>
    <experiments>3</experiments>
</comment>
<comment type="interaction">
    <interactant intactId="EBI-11959885">
        <id>Q07627</id>
    </interactant>
    <interactant intactId="EBI-448771">
        <id>Q92608</id>
        <label>DOCK2</label>
    </interactant>
    <organismsDiffer>false</organismsDiffer>
    <experiments>3</experiments>
</comment>
<comment type="interaction">
    <interactant intactId="EBI-11959885">
        <id>Q07627</id>
    </interactant>
    <interactant intactId="EBI-722730">
        <id>P52797</id>
        <label>EFNA3</label>
    </interactant>
    <organismsDiffer>false</organismsDiffer>
    <experiments>3</experiments>
</comment>
<comment type="interaction">
    <interactant intactId="EBI-11959885">
        <id>Q07627</id>
    </interactant>
    <interactant intactId="EBI-6309137">
        <id>Q9NPA0</id>
        <label>EMC7</label>
    </interactant>
    <organismsDiffer>false</organismsDiffer>
    <experiments>3</experiments>
</comment>
<comment type="interaction">
    <interactant intactId="EBI-11959885">
        <id>Q07627</id>
    </interactant>
    <interactant intactId="EBI-11960181">
        <id>A4D161</id>
        <label>FAM221A</label>
    </interactant>
    <organismsDiffer>false</organismsDiffer>
    <experiments>3</experiments>
</comment>
<comment type="interaction">
    <interactant intactId="EBI-11959885">
        <id>Q07627</id>
    </interactant>
    <interactant intactId="EBI-11956087">
        <id>Q5HYJ3-3</id>
        <label>FAM76B</label>
    </interactant>
    <organismsDiffer>false</organismsDiffer>
    <experiments>3</experiments>
</comment>
<comment type="interaction">
    <interactant intactId="EBI-11959885">
        <id>Q07627</id>
    </interactant>
    <interactant intactId="EBI-6658203">
        <id>Q86YD7</id>
        <label>FAM90A1</label>
    </interactant>
    <organismsDiffer>false</organismsDiffer>
    <experiments>3</experiments>
</comment>
<comment type="interaction">
    <interactant intactId="EBI-11959885">
        <id>Q07627</id>
    </interactant>
    <interactant intactId="EBI-2513774">
        <id>O95363</id>
        <label>FARS2</label>
    </interactant>
    <organismsDiffer>false</organismsDiffer>
    <experiments>3</experiments>
</comment>
<comment type="interaction">
    <interactant intactId="EBI-11959885">
        <id>Q07627</id>
    </interactant>
    <interactant intactId="EBI-11988727">
        <id>A0PJY2</id>
        <label>FEZF1</label>
    </interactant>
    <organismsDiffer>false</organismsDiffer>
    <experiments>3</experiments>
</comment>
<comment type="interaction">
    <interactant intactId="EBI-11959885">
        <id>Q07627</id>
    </interactant>
    <interactant intactId="EBI-11998976">
        <id>P68106-2</id>
        <label>FKBP1B</label>
    </interactant>
    <organismsDiffer>false</organismsDiffer>
    <experiments>3</experiments>
</comment>
<comment type="interaction">
    <interactant intactId="EBI-11959885">
        <id>Q07627</id>
    </interactant>
    <interactant intactId="EBI-11961494">
        <id>Q6VB84</id>
        <label>FOXD4L3</label>
    </interactant>
    <organismsDiffer>false</organismsDiffer>
    <experiments>3</experiments>
</comment>
<comment type="interaction">
    <interactant intactId="EBI-11959885">
        <id>Q07627</id>
    </interactant>
    <interactant intactId="EBI-725515">
        <id>O43559</id>
        <label>FRS3</label>
    </interactant>
    <organismsDiffer>false</organismsDiffer>
    <experiments>3</experiments>
</comment>
<comment type="interaction">
    <interactant intactId="EBI-11959885">
        <id>Q07627</id>
    </interactant>
    <interactant intactId="EBI-8803802">
        <id>Q9ULW2</id>
        <label>FZD10</label>
    </interactant>
    <organismsDiffer>false</organismsDiffer>
    <experiments>3</experiments>
</comment>
<comment type="interaction">
    <interactant intactId="EBI-11959885">
        <id>Q07627</id>
    </interactant>
    <interactant intactId="EBI-752049">
        <id>Q8NEG0</id>
        <label>GARIN6</label>
    </interactant>
    <organismsDiffer>false</organismsDiffer>
    <experiments>3</experiments>
</comment>
<comment type="interaction">
    <interactant intactId="EBI-11959885">
        <id>Q07627</id>
    </interactant>
    <interactant intactId="EBI-7466542">
        <id>P43220</id>
        <label>GLP1R</label>
    </interactant>
    <organismsDiffer>false</organismsDiffer>
    <experiments>3</experiments>
</comment>
<comment type="interaction">
    <interactant intactId="EBI-11959885">
        <id>Q07627</id>
    </interactant>
    <interactant intactId="EBI-11975289">
        <id>Q9Y223-2</id>
        <label>GNE</label>
    </interactant>
    <organismsDiffer>false</organismsDiffer>
    <experiments>3</experiments>
</comment>
<comment type="interaction">
    <interactant intactId="EBI-11959885">
        <id>Q07627</id>
    </interactant>
    <interactant intactId="EBI-747754">
        <id>P28799</id>
        <label>GRN</label>
    </interactant>
    <organismsDiffer>false</organismsDiffer>
    <experiments>3</experiments>
</comment>
<comment type="interaction">
    <interactant intactId="EBI-11959885">
        <id>Q07627</id>
    </interactant>
    <interactant intactId="EBI-353467">
        <id>P09211</id>
        <label>GSTP1</label>
    </interactant>
    <organismsDiffer>false</organismsDiffer>
    <experiments>3</experiments>
</comment>
<comment type="interaction">
    <interactant intactId="EBI-11959885">
        <id>Q07627</id>
    </interactant>
    <interactant intactId="EBI-11978177">
        <id>Q96NT3-2</id>
        <label>GUCD1</label>
    </interactant>
    <organismsDiffer>false</organismsDiffer>
    <experiments>3</experiments>
</comment>
<comment type="interaction">
    <interactant intactId="EBI-11959885">
        <id>Q07627</id>
    </interactant>
    <interactant intactId="EBI-9834454">
        <id>P08631-2</id>
        <label>HCK</label>
    </interactant>
    <organismsDiffer>false</organismsDiffer>
    <experiments>3</experiments>
</comment>
<comment type="interaction">
    <interactant intactId="EBI-11959885">
        <id>Q07627</id>
    </interactant>
    <interactant intactId="EBI-750630">
        <id>Q9UBP5</id>
        <label>HEY2</label>
    </interactant>
    <organismsDiffer>false</organismsDiffer>
    <experiments>3</experiments>
</comment>
<comment type="interaction">
    <interactant intactId="EBI-11959885">
        <id>Q07627</id>
    </interactant>
    <interactant intactId="EBI-12168227">
        <id>A8MVS5</id>
        <label>HIDE1</label>
    </interactant>
    <organismsDiffer>false</organismsDiffer>
    <experiments>3</experiments>
</comment>
<comment type="interaction">
    <interactant intactId="EBI-11959885">
        <id>Q07627</id>
    </interactant>
    <interactant intactId="EBI-740785">
        <id>P49639</id>
        <label>HOXA1</label>
    </interactant>
    <organismsDiffer>false</organismsDiffer>
    <experiments>3</experiments>
</comment>
<comment type="interaction">
    <interactant intactId="EBI-11959885">
        <id>Q07627</id>
    </interactant>
    <interactant intactId="EBI-3893317">
        <id>P09067</id>
        <label>HOXB5</label>
    </interactant>
    <organismsDiffer>false</organismsDiffer>
    <experiments>3</experiments>
</comment>
<comment type="interaction">
    <interactant intactId="EBI-11959885">
        <id>Q07627</id>
    </interactant>
    <interactant intactId="EBI-745290">
        <id>P17482</id>
        <label>HOXB9</label>
    </interactant>
    <organismsDiffer>false</organismsDiffer>
    <experiments>3</experiments>
</comment>
<comment type="interaction">
    <interactant intactId="EBI-11959885">
        <id>Q07627</id>
    </interactant>
    <interactant intactId="EBI-1752118">
        <id>P31273</id>
        <label>HOXC8</label>
    </interactant>
    <organismsDiffer>false</organismsDiffer>
    <experiments>3</experiments>
</comment>
<comment type="interaction">
    <interactant intactId="EBI-11959885">
        <id>Q07627</id>
    </interactant>
    <interactant intactId="EBI-749311">
        <id>P37235</id>
        <label>HPCAL1</label>
    </interactant>
    <organismsDiffer>false</organismsDiffer>
    <experiments>3</experiments>
</comment>
<comment type="interaction">
    <interactant intactId="EBI-11959885">
        <id>Q07627</id>
    </interactant>
    <interactant intactId="EBI-748664">
        <id>O75506</id>
        <label>HSBP1</label>
    </interactant>
    <organismsDiffer>false</organismsDiffer>
    <experiments>3</experiments>
</comment>
<comment type="interaction">
    <interactant intactId="EBI-11959885">
        <id>Q07627</id>
    </interactant>
    <interactant intactId="EBI-2806068">
        <id>Q12891</id>
        <label>HYAL2</label>
    </interactant>
    <organismsDiffer>false</organismsDiffer>
    <experiments>3</experiments>
</comment>
<comment type="interaction">
    <interactant intactId="EBI-11959885">
        <id>Q07627</id>
    </interactant>
    <interactant intactId="EBI-12167419">
        <id>Q6IBB0</id>
        <label>IFITM2</label>
    </interactant>
    <organismsDiffer>false</organismsDiffer>
    <experiments>3</experiments>
</comment>
<comment type="interaction">
    <interactant intactId="EBI-11959885">
        <id>Q07627</id>
    </interactant>
    <interactant intactId="EBI-8293590">
        <id>Q969P0</id>
        <label>IGSF8</label>
    </interactant>
    <organismsDiffer>false</organismsDiffer>
    <experiments>3</experiments>
</comment>
<comment type="interaction">
    <interactant intactId="EBI-11959885">
        <id>Q07627</id>
    </interactant>
    <interactant intactId="EBI-17178971">
        <id>Q14005-2</id>
        <label>IL16</label>
    </interactant>
    <organismsDiffer>false</organismsDiffer>
    <experiments>4</experiments>
</comment>
<comment type="interaction">
    <interactant intactId="EBI-11959885">
        <id>Q07627</id>
    </interactant>
    <interactant intactId="EBI-7090529">
        <id>P01308</id>
        <label>INS</label>
    </interactant>
    <organismsDiffer>false</organismsDiffer>
    <experiments>3</experiments>
</comment>
<comment type="interaction">
    <interactant intactId="EBI-11959885">
        <id>Q07627</id>
    </interactant>
    <interactant intactId="EBI-11051601">
        <id>P16144-2</id>
        <label>ITGB4</label>
    </interactant>
    <organismsDiffer>false</organismsDiffer>
    <experiments>3</experiments>
</comment>
<comment type="interaction">
    <interactant intactId="EBI-11959885">
        <id>Q07627</id>
    </interactant>
    <interactant intactId="EBI-1223434">
        <id>P18084</id>
        <label>ITGB5</label>
    </interactant>
    <organismsDiffer>false</organismsDiffer>
    <experiments>3</experiments>
</comment>
<comment type="interaction">
    <interactant intactId="EBI-11959885">
        <id>Q07627</id>
    </interactant>
    <interactant intactId="EBI-2510602">
        <id>Q15040</id>
        <label>JOSD1</label>
    </interactant>
    <organismsDiffer>false</organismsDiffer>
    <experiments>3</experiments>
</comment>
<comment type="interaction">
    <interactant intactId="EBI-11959885">
        <id>Q07627</id>
    </interactant>
    <interactant intactId="EBI-6426443">
        <id>Q2WGJ6</id>
        <label>KLHL38</label>
    </interactant>
    <organismsDiffer>false</organismsDiffer>
    <experiments>3</experiments>
</comment>
<comment type="interaction">
    <interactant intactId="EBI-11959885">
        <id>Q07627</id>
    </interactant>
    <interactant intactId="EBI-3915857">
        <id>O60259</id>
        <label>KLK8</label>
    </interactant>
    <organismsDiffer>false</organismsDiffer>
    <experiments>3</experiments>
</comment>
<comment type="interaction">
    <interactant intactId="EBI-11959885">
        <id>Q07627</id>
    </interactant>
    <interactant intactId="EBI-742094">
        <id>P35900</id>
        <label>KRT20</label>
    </interactant>
    <organismsDiffer>false</organismsDiffer>
    <experiments>3</experiments>
</comment>
<comment type="interaction">
    <interactant intactId="EBI-11959885">
        <id>Q07627</id>
    </interactant>
    <interactant intactId="EBI-10217483">
        <id>P60412</id>
        <label>KRTAP10-11</label>
    </interactant>
    <organismsDiffer>false</organismsDiffer>
    <experiments>3</experiments>
</comment>
<comment type="interaction">
    <interactant intactId="EBI-11959885">
        <id>Q07627</id>
    </interactant>
    <interactant intactId="EBI-10171774">
        <id>P60410</id>
        <label>KRTAP10-8</label>
    </interactant>
    <organismsDiffer>false</organismsDiffer>
    <experiments>3</experiments>
</comment>
<comment type="interaction">
    <interactant intactId="EBI-11959885">
        <id>Q07627</id>
    </interactant>
    <interactant intactId="EBI-10172052">
        <id>P60411</id>
        <label>KRTAP10-9</label>
    </interactant>
    <organismsDiffer>false</organismsDiffer>
    <experiments>3</experiments>
</comment>
<comment type="interaction">
    <interactant intactId="EBI-11959885">
        <id>Q07627</id>
    </interactant>
    <interactant intactId="EBI-10210845">
        <id>P59990</id>
        <label>KRTAP12-1</label>
    </interactant>
    <organismsDiffer>false</organismsDiffer>
    <experiments>3</experiments>
</comment>
<comment type="interaction">
    <interactant intactId="EBI-11959885">
        <id>Q07627</id>
    </interactant>
    <interactant intactId="EBI-11953334">
        <id>P60328</id>
        <label>KRTAP12-3</label>
    </interactant>
    <organismsDiffer>false</organismsDiffer>
    <experiments>3</experiments>
</comment>
<comment type="interaction">
    <interactant intactId="EBI-11959885">
        <id>Q07627</id>
    </interactant>
    <interactant intactId="EBI-11953846">
        <id>Q52LG2</id>
        <label>KRTAP13-2</label>
    </interactant>
    <organismsDiffer>false</organismsDiffer>
    <experiments>3</experiments>
</comment>
<comment type="interaction">
    <interactant intactId="EBI-11959885">
        <id>Q07627</id>
    </interactant>
    <interactant intactId="EBI-14065470">
        <id>Q9BYR9</id>
        <label>KRTAP2-4</label>
    </interactant>
    <organismsDiffer>false</organismsDiffer>
    <experiments>3</experiments>
</comment>
<comment type="interaction">
    <interactant intactId="EBI-11959885">
        <id>Q07627</id>
    </interactant>
    <interactant intactId="EBI-3957672">
        <id>Q6PEX3</id>
        <label>KRTAP26-1</label>
    </interactant>
    <organismsDiffer>false</organismsDiffer>
    <experiments>3</experiments>
</comment>
<comment type="interaction">
    <interactant intactId="EBI-11959885">
        <id>Q07627</id>
    </interactant>
    <interactant intactId="EBI-739863">
        <id>Q9BQ66</id>
        <label>KRTAP4-12</label>
    </interactant>
    <organismsDiffer>false</organismsDiffer>
    <experiments>3</experiments>
</comment>
<comment type="interaction">
    <interactant intactId="EBI-11959885">
        <id>Q07627</id>
    </interactant>
    <interactant intactId="EBI-11993254">
        <id>Q9BYR2</id>
        <label>KRTAP4-5</label>
    </interactant>
    <organismsDiffer>false</organismsDiffer>
    <experiments>3</experiments>
</comment>
<comment type="interaction">
    <interactant intactId="EBI-11959885">
        <id>Q07627</id>
    </interactant>
    <interactant intactId="EBI-11993296">
        <id>Q6L8G4</id>
        <label>KRTAP5-11</label>
    </interactant>
    <organismsDiffer>false</organismsDiffer>
    <experiments>3</experiments>
</comment>
<comment type="interaction">
    <interactant intactId="EBI-11959885">
        <id>Q07627</id>
    </interactant>
    <interactant intactId="EBI-11963072">
        <id>Q6L8H1</id>
        <label>KRTAP5-4</label>
    </interactant>
    <organismsDiffer>false</organismsDiffer>
    <experiments>3</experiments>
</comment>
<comment type="interaction">
    <interactant intactId="EBI-11959885">
        <id>Q07627</id>
    </interactant>
    <interactant intactId="EBI-10250562">
        <id>Q6L8G9</id>
        <label>KRTAP5-6</label>
    </interactant>
    <organismsDiffer>false</organismsDiffer>
    <experiments>3</experiments>
</comment>
<comment type="interaction">
    <interactant intactId="EBI-11959885">
        <id>Q07627</id>
    </interactant>
    <interactant intactId="EBI-1044640">
        <id>Q9BYQ4</id>
        <label>KRTAP9-2</label>
    </interactant>
    <organismsDiffer>false</organismsDiffer>
    <experiments>3</experiments>
</comment>
<comment type="interaction">
    <interactant intactId="EBI-11959885">
        <id>Q07627</id>
    </interactant>
    <interactant intactId="EBI-1043191">
        <id>Q9BYQ3</id>
        <label>KRTAP9-3</label>
    </interactant>
    <organismsDiffer>false</organismsDiffer>
    <experiments>3</experiments>
</comment>
<comment type="interaction">
    <interactant intactId="EBI-11959885">
        <id>Q07627</id>
    </interactant>
    <interactant intactId="EBI-11958364">
        <id>Q9BYQ0</id>
        <label>KRTAP9-8</label>
    </interactant>
    <organismsDiffer>false</organismsDiffer>
    <experiments>3</experiments>
</comment>
<comment type="interaction">
    <interactant intactId="EBI-11959885">
        <id>Q07627</id>
    </interactant>
    <interactant intactId="EBI-11962058">
        <id>Q5T7P2</id>
        <label>LCE1A</label>
    </interactant>
    <organismsDiffer>false</organismsDiffer>
    <experiments>3</experiments>
</comment>
<comment type="interaction">
    <interactant intactId="EBI-11959885">
        <id>Q07627</id>
    </interactant>
    <interactant intactId="EBI-11955335">
        <id>Q5T753</id>
        <label>LCE1E</label>
    </interactant>
    <organismsDiffer>false</organismsDiffer>
    <experiments>3</experiments>
</comment>
<comment type="interaction">
    <interactant intactId="EBI-11959885">
        <id>Q07627</id>
    </interactant>
    <interactant intactId="EBI-11958008">
        <id>Q5T754</id>
        <label>LCE1F</label>
    </interactant>
    <organismsDiffer>false</organismsDiffer>
    <experiments>3</experiments>
</comment>
<comment type="interaction">
    <interactant intactId="EBI-11959885">
        <id>Q07627</id>
    </interactant>
    <interactant intactId="EBI-11478468">
        <id>O14633</id>
        <label>LCE2B</label>
    </interactant>
    <organismsDiffer>false</organismsDiffer>
    <experiments>3</experiments>
</comment>
<comment type="interaction">
    <interactant intactId="EBI-11959885">
        <id>Q07627</id>
    </interactant>
    <interactant intactId="EBI-11973993">
        <id>Q5TA81</id>
        <label>LCE2C</label>
    </interactant>
    <organismsDiffer>false</organismsDiffer>
    <experiments>3</experiments>
</comment>
<comment type="interaction">
    <interactant intactId="EBI-11959885">
        <id>Q07627</id>
    </interactant>
    <interactant intactId="EBI-10246750">
        <id>Q5TA82</id>
        <label>LCE2D</label>
    </interactant>
    <organismsDiffer>false</organismsDiffer>
    <experiments>3</experiments>
</comment>
<comment type="interaction">
    <interactant intactId="EBI-11959885">
        <id>Q07627</id>
    </interactant>
    <interactant intactId="EBI-11974495">
        <id>Q5TA77</id>
        <label>LCE3B</label>
    </interactant>
    <organismsDiffer>false</organismsDiffer>
    <experiments>3</experiments>
</comment>
<comment type="interaction">
    <interactant intactId="EBI-11959885">
        <id>Q07627</id>
    </interactant>
    <interactant intactId="EBI-10245291">
        <id>Q5T5A8</id>
        <label>LCE3C</label>
    </interactant>
    <organismsDiffer>false</organismsDiffer>
    <experiments>3</experiments>
</comment>
<comment type="interaction">
    <interactant intactId="EBI-11959885">
        <id>Q07627</id>
    </interactant>
    <interactant intactId="EBI-6658837">
        <id>Q9BYE3</id>
        <label>LCE3D</label>
    </interactant>
    <organismsDiffer>false</organismsDiffer>
    <experiments>3</experiments>
</comment>
<comment type="interaction">
    <interactant intactId="EBI-11959885">
        <id>Q07627</id>
    </interactant>
    <interactant intactId="EBI-10245456">
        <id>Q5T5B0</id>
        <label>LCE3E</label>
    </interactant>
    <organismsDiffer>false</organismsDiffer>
    <experiments>3</experiments>
</comment>
<comment type="interaction">
    <interactant intactId="EBI-11959885">
        <id>Q07627</id>
    </interactant>
    <interactant intactId="EBI-10246358">
        <id>Q5TA78</id>
        <label>LCE4A</label>
    </interactant>
    <organismsDiffer>false</organismsDiffer>
    <experiments>3</experiments>
</comment>
<comment type="interaction">
    <interactant intactId="EBI-11959885">
        <id>Q07627</id>
    </interactant>
    <interactant intactId="EBI-11955689">
        <id>Q5TCM9</id>
        <label>LCE5A</label>
    </interactant>
    <organismsDiffer>false</organismsDiffer>
    <experiments>3</experiments>
</comment>
<comment type="interaction">
    <interactant intactId="EBI-11959885">
        <id>Q07627</id>
    </interactant>
    <interactant intactId="EBI-739832">
        <id>Q8TBB1</id>
        <label>LNX1</label>
    </interactant>
    <organismsDiffer>false</organismsDiffer>
    <experiments>3</experiments>
</comment>
<comment type="interaction">
    <interactant intactId="EBI-11959885">
        <id>Q07627</id>
    </interactant>
    <interactant intactId="EBI-7910762">
        <id>Q6PJG9</id>
        <label>LRFN4</label>
    </interactant>
    <organismsDiffer>false</organismsDiffer>
    <experiments>3</experiments>
</comment>
<comment type="interaction">
    <interactant intactId="EBI-11959885">
        <id>Q07627</id>
    </interactant>
    <interactant intactId="EBI-745046">
        <id>Q8WUT4</id>
        <label>LRRN4</label>
    </interactant>
    <organismsDiffer>false</organismsDiffer>
    <experiments>3</experiments>
</comment>
<comment type="interaction">
    <interactant intactId="EBI-11959885">
        <id>Q07627</id>
    </interactant>
    <interactant intactId="EBI-746778">
        <id>Q96A72</id>
        <label>MAGOHB</label>
    </interactant>
    <organismsDiffer>false</organismsDiffer>
    <experiments>3</experiments>
</comment>
<comment type="interaction">
    <interactant intactId="EBI-11959885">
        <id>Q07627</id>
    </interactant>
    <interactant intactId="EBI-947402">
        <id>O60336</id>
        <label>MAPKBP1</label>
    </interactant>
    <organismsDiffer>false</organismsDiffer>
    <experiments>3</experiments>
</comment>
<comment type="interaction">
    <interactant intactId="EBI-11959885">
        <id>Q07627</id>
    </interactant>
    <interactant intactId="EBI-10195914">
        <id>P08582-2</id>
        <label>MELTF</label>
    </interactant>
    <organismsDiffer>false</organismsDiffer>
    <experiments>3</experiments>
</comment>
<comment type="interaction">
    <interactant intactId="EBI-11959885">
        <id>Q07627</id>
    </interactant>
    <interactant intactId="EBI-399076">
        <id>Q9NV56</id>
        <label>MRGBP</label>
    </interactant>
    <organismsDiffer>false</organismsDiffer>
    <experiments>3</experiments>
</comment>
<comment type="interaction">
    <interactant intactId="EBI-11959885">
        <id>Q07627</id>
    </interactant>
    <interactant intactId="EBI-1046141">
        <id>Q16540</id>
        <label>MRPL23</label>
    </interactant>
    <organismsDiffer>false</organismsDiffer>
    <experiments>3</experiments>
</comment>
<comment type="interaction">
    <interactant intactId="EBI-11959885">
        <id>Q07627</id>
    </interactant>
    <interactant intactId="EBI-12015462">
        <id>P07438</id>
        <label>MT1B</label>
    </interactant>
    <organismsDiffer>false</organismsDiffer>
    <experiments>3</experiments>
</comment>
<comment type="interaction">
    <interactant intactId="EBI-11959885">
        <id>Q07627</id>
    </interactant>
    <interactant intactId="EBI-741574">
        <id>Q9BW11</id>
        <label>MXD3</label>
    </interactant>
    <organismsDiffer>false</organismsDiffer>
    <experiments>3</experiments>
</comment>
<comment type="interaction">
    <interactant intactId="EBI-11959885">
        <id>Q07627</id>
    </interactant>
    <interactant intactId="EBI-10211940">
        <id>P50539-3</id>
        <label>MXI1</label>
    </interactant>
    <organismsDiffer>false</organismsDiffer>
    <experiments>3</experiments>
</comment>
<comment type="interaction">
    <interactant intactId="EBI-11959885">
        <id>Q07627</id>
    </interactant>
    <interactant intactId="EBI-12010196">
        <id>P52179-2</id>
        <label>MYOM1</label>
    </interactant>
    <organismsDiffer>false</organismsDiffer>
    <experiments>3</experiments>
</comment>
<comment type="interaction">
    <interactant intactId="EBI-11959885">
        <id>Q07627</id>
    </interactant>
    <interactant intactId="EBI-6979889">
        <id>Q92692-2</id>
        <label>NECTIN2</label>
    </interactant>
    <organismsDiffer>false</organismsDiffer>
    <experiments>3</experiments>
</comment>
<comment type="interaction">
    <interactant intactId="EBI-11959885">
        <id>Q07627</id>
    </interactant>
    <interactant intactId="EBI-12106440">
        <id>Q9NQS3-2</id>
        <label>NECTIN3</label>
    </interactant>
    <organismsDiffer>false</organismsDiffer>
    <experiments>3</experiments>
</comment>
<comment type="interaction">
    <interactant intactId="EBI-11959885">
        <id>Q07627</id>
    </interactant>
    <interactant intactId="EBI-10210351">
        <id>P48645</id>
        <label>NMU</label>
    </interactant>
    <organismsDiffer>false</organismsDiffer>
    <experiments>3</experiments>
</comment>
<comment type="interaction">
    <interactant intactId="EBI-11959885">
        <id>Q07627</id>
    </interactant>
    <interactant intactId="EBI-748927">
        <id>Q9NQX5</id>
        <label>NPDC1</label>
    </interactant>
    <organismsDiffer>false</organismsDiffer>
    <experiments>3</experiments>
</comment>
<comment type="interaction">
    <interactant intactId="EBI-11959885">
        <id>Q07627</id>
    </interactant>
    <interactant intactId="EBI-10250949">
        <id>Q6NSM0</id>
        <label>NR1D2</label>
    </interactant>
    <organismsDiffer>false</organismsDiffer>
    <experiments>3</experiments>
</comment>
<comment type="interaction">
    <interactant intactId="EBI-11959885">
        <id>Q07627</id>
    </interactant>
    <interactant intactId="EBI-12027160">
        <id>Q9P121-3</id>
        <label>NTM</label>
    </interactant>
    <organismsDiffer>false</organismsDiffer>
    <experiments>3</experiments>
</comment>
<comment type="interaction">
    <interactant intactId="EBI-11959885">
        <id>Q07627</id>
    </interactant>
    <interactant intactId="EBI-1048886">
        <id>Q9Y5Y2</id>
        <label>NUBP2</label>
    </interactant>
    <organismsDiffer>false</organismsDiffer>
    <experiments>3</experiments>
</comment>
<comment type="interaction">
    <interactant intactId="EBI-11959885">
        <id>Q07627</id>
    </interactant>
    <interactant intactId="EBI-10225049">
        <id>Q7RTU3</id>
        <label>OLIG3</label>
    </interactant>
    <organismsDiffer>false</organismsDiffer>
    <experiments>3</experiments>
</comment>
<comment type="interaction">
    <interactant intactId="EBI-11959885">
        <id>Q07627</id>
    </interactant>
    <interactant intactId="EBI-13413682">
        <id>A6ND48</id>
        <label>OR14I1</label>
    </interactant>
    <organismsDiffer>false</organismsDiffer>
    <experiments>3</experiments>
</comment>
<comment type="interaction">
    <interactant intactId="EBI-11959885">
        <id>Q07627</id>
    </interactant>
    <interactant intactId="EBI-740446">
        <id>P32242</id>
        <label>OTX1</label>
    </interactant>
    <organismsDiffer>false</organismsDiffer>
    <experiments>3</experiments>
</comment>
<comment type="interaction">
    <interactant intactId="EBI-11959885">
        <id>Q07627</id>
    </interactant>
    <interactant intactId="EBI-2828248">
        <id>Q99571</id>
        <label>P2RX4</label>
    </interactant>
    <organismsDiffer>false</organismsDiffer>
    <experiments>3</experiments>
</comment>
<comment type="interaction">
    <interactant intactId="EBI-11959885">
        <id>Q07627</id>
    </interactant>
    <interactant intactId="EBI-10235794">
        <id>Q15077</id>
        <label>P2RY6</label>
    </interactant>
    <organismsDiffer>false</organismsDiffer>
    <experiments>3</experiments>
</comment>
<comment type="interaction">
    <interactant intactId="EBI-11959885">
        <id>Q07627</id>
    </interactant>
    <interactant intactId="EBI-11956269">
        <id>Q92824-2</id>
        <label>PCSK5</label>
    </interactant>
    <organismsDiffer>false</organismsDiffer>
    <experiments>3</experiments>
</comment>
<comment type="interaction">
    <interactant intactId="EBI-11959885">
        <id>Q07627</id>
    </interactant>
    <interactant intactId="EBI-11524542">
        <id>O76083-2</id>
        <label>PDE9A</label>
    </interactant>
    <organismsDiffer>false</organismsDiffer>
    <experiments>3</experiments>
</comment>
<comment type="interaction">
    <interactant intactId="EBI-11959885">
        <id>Q07627</id>
    </interactant>
    <interactant intactId="EBI-10310808">
        <id>Q9HCN3</id>
        <label>PGAP6</label>
    </interactant>
    <organismsDiffer>false</organismsDiffer>
    <experiments>3</experiments>
</comment>
<comment type="interaction">
    <interactant intactId="EBI-11959885">
        <id>Q07627</id>
    </interactant>
    <interactant intactId="EBI-14084211">
        <id>A2BDE7</id>
        <label>PHLDA1</label>
    </interactant>
    <organismsDiffer>false</organismsDiffer>
    <experiments>3</experiments>
</comment>
<comment type="interaction">
    <interactant intactId="EBI-11959885">
        <id>Q07627</id>
    </interactant>
    <interactant intactId="EBI-1053424">
        <id>O43741</id>
        <label>PRKAB2</label>
    </interactant>
    <organismsDiffer>false</organismsDiffer>
    <experiments>3</experiments>
</comment>
<comment type="interaction">
    <interactant intactId="EBI-11959885">
        <id>Q07627</id>
    </interactant>
    <interactant intactId="EBI-1181439">
        <id>P54619</id>
        <label>PRKAG1</label>
    </interactant>
    <organismsDiffer>false</organismsDiffer>
    <experiments>3</experiments>
</comment>
<comment type="interaction">
    <interactant intactId="EBI-11959885">
        <id>Q07627</id>
    </interactant>
    <interactant intactId="EBI-1567797">
        <id>Q8WWY3</id>
        <label>PRPF31</label>
    </interactant>
    <organismsDiffer>false</organismsDiffer>
    <experiments>3</experiments>
</comment>
<comment type="interaction">
    <interactant intactId="EBI-11959885">
        <id>Q07627</id>
    </interactant>
    <interactant intactId="EBI-359352">
        <id>P25786</id>
        <label>PSMA1</label>
    </interactant>
    <organismsDiffer>false</organismsDiffer>
    <experiments>3</experiments>
</comment>
<comment type="interaction">
    <interactant intactId="EBI-11959885">
        <id>Q07627</id>
    </interactant>
    <interactant intactId="EBI-3919694">
        <id>P15151</id>
        <label>PVR</label>
    </interactant>
    <organismsDiffer>false</organismsDiffer>
    <experiments>3</experiments>
</comment>
<comment type="interaction">
    <interactant intactId="EBI-11959885">
        <id>Q07627</id>
    </interactant>
    <interactant intactId="EBI-739851">
        <id>Q15274</id>
        <label>QPRT</label>
    </interactant>
    <organismsDiffer>false</organismsDiffer>
    <experiments>3</experiments>
</comment>
<comment type="interaction">
    <interactant intactId="EBI-11959885">
        <id>Q07627</id>
    </interactant>
    <interactant intactId="EBI-948428">
        <id>Q9Y2K5</id>
        <label>R3HDM2</label>
    </interactant>
    <organismsDiffer>false</organismsDiffer>
    <experiments>3</experiments>
</comment>
<comment type="interaction">
    <interactant intactId="EBI-11959885">
        <id>Q07627</id>
    </interactant>
    <interactant intactId="EBI-11304833">
        <id>Q8IYK8</id>
        <label>REM2</label>
    </interactant>
    <organismsDiffer>false</organismsDiffer>
    <experiments>3</experiments>
</comment>
<comment type="interaction">
    <interactant intactId="EBI-11959885">
        <id>Q07627</id>
    </interactant>
    <interactant intactId="EBI-4479407">
        <id>Q86WX3</id>
        <label>RPS19BP1</label>
    </interactant>
    <organismsDiffer>false</organismsDiffer>
    <experiments>3</experiments>
</comment>
<comment type="interaction">
    <interactant intactId="EBI-11959885">
        <id>Q07627</id>
    </interactant>
    <interactant intactId="EBI-353027">
        <id>P62857</id>
        <label>RPS28</label>
    </interactant>
    <organismsDiffer>false</organismsDiffer>
    <experiments>3</experiments>
</comment>
<comment type="interaction">
    <interactant intactId="EBI-11959885">
        <id>Q07627</id>
    </interactant>
    <interactant intactId="EBI-5458784">
        <id>Q6P087</id>
        <label>RPUSD3</label>
    </interactant>
    <organismsDiffer>false</organismsDiffer>
    <experiments>3</experiments>
</comment>
<comment type="interaction">
    <interactant intactId="EBI-11959885">
        <id>Q07627</id>
    </interactant>
    <interactant intactId="EBI-10258951">
        <id>Q86UN2</id>
        <label>RTN4RL1</label>
    </interactant>
    <organismsDiffer>false</organismsDiffer>
    <experiments>3</experiments>
</comment>
<comment type="interaction">
    <interactant intactId="EBI-11959885">
        <id>Q07627</id>
    </interactant>
    <interactant intactId="EBI-12056025">
        <id>Q14162</id>
        <label>SCARF1</label>
    </interactant>
    <organismsDiffer>false</organismsDiffer>
    <experiments>3</experiments>
</comment>
<comment type="interaction">
    <interactant intactId="EBI-11959885">
        <id>Q07627</id>
    </interactant>
    <interactant intactId="EBI-748391">
        <id>Q9BWG6</id>
        <label>SCNM1</label>
    </interactant>
    <organismsDiffer>false</organismsDiffer>
    <experiments>3</experiments>
</comment>
<comment type="interaction">
    <interactant intactId="EBI-11959885">
        <id>Q07627</id>
    </interactant>
    <interactant intactId="EBI-10204280">
        <id>A0A0S2Z4U3</id>
        <label>SDC3</label>
    </interactant>
    <organismsDiffer>false</organismsDiffer>
    <experiments>3</experiments>
</comment>
<comment type="interaction">
    <interactant intactId="EBI-11959885">
        <id>Q07627</id>
    </interactant>
    <interactant intactId="EBI-11017428">
        <id>Q13214-2</id>
        <label>SEMA3B</label>
    </interactant>
    <organismsDiffer>false</organismsDiffer>
    <experiments>3</experiments>
</comment>
<comment type="interaction">
    <interactant intactId="EBI-11959885">
        <id>Q07627</id>
    </interactant>
    <interactant intactId="EBI-11955083">
        <id>Q9NUL5-4</id>
        <label>SHFL</label>
    </interactant>
    <organismsDiffer>false</organismsDiffer>
    <experiments>3</experiments>
</comment>
<comment type="interaction">
    <interactant intactId="EBI-11959885">
        <id>Q07627</id>
    </interactant>
    <interactant intactId="EBI-11998660">
        <id>Q9UHI7-3</id>
        <label>SLC23A1</label>
    </interactant>
    <organismsDiffer>false</organismsDiffer>
    <experiments>3</experiments>
</comment>
<comment type="interaction">
    <interactant intactId="EBI-11959885">
        <id>Q07627</id>
    </interactant>
    <interactant intactId="EBI-10265149">
        <id>Q8N370</id>
        <label>SLC43A2</label>
    </interactant>
    <organismsDiffer>false</organismsDiffer>
    <experiments>3</experiments>
</comment>
<comment type="interaction">
    <interactant intactId="EBI-11959885">
        <id>Q07627</id>
    </interactant>
    <interactant intactId="EBI-10311198">
        <id>Q9NP91</id>
        <label>SLC6A20</label>
    </interactant>
    <organismsDiffer>false</organismsDiffer>
    <experiments>3</experiments>
</comment>
<comment type="interaction">
    <interactant intactId="EBI-11959885">
        <id>Q07627</id>
    </interactant>
    <interactant intactId="EBI-3843348">
        <id>Q9UPY5</id>
        <label>SLC7A11</label>
    </interactant>
    <organismsDiffer>false</organismsDiffer>
    <experiments>3</experiments>
</comment>
<comment type="interaction">
    <interactant intactId="EBI-11959885">
        <id>Q07627</id>
    </interactant>
    <interactant intactId="EBI-947791">
        <id>O75093</id>
        <label>SLIT1</label>
    </interactant>
    <organismsDiffer>false</organismsDiffer>
    <experiments>3</experiments>
</comment>
<comment type="interaction">
    <interactant intactId="EBI-11959885">
        <id>Q07627</id>
    </interactant>
    <interactant intactId="EBI-455078">
        <id>Q969G3</id>
        <label>SMARCE1</label>
    </interactant>
    <organismsDiffer>false</organismsDiffer>
    <experiments>3</experiments>
</comment>
<comment type="interaction">
    <interactant intactId="EBI-11959885">
        <id>Q07627</id>
    </interactant>
    <interactant intactId="EBI-750494">
        <id>P49901</id>
        <label>SMCP</label>
    </interactant>
    <organismsDiffer>false</organismsDiffer>
    <experiments>3</experiments>
</comment>
<comment type="interaction">
    <interactant intactId="EBI-11959885">
        <id>Q07627</id>
    </interactant>
    <interactant intactId="EBI-12162539">
        <id>Q9H4F8-2</id>
        <label>SMOC1</label>
    </interactant>
    <organismsDiffer>false</organismsDiffer>
    <experiments>3</experiments>
</comment>
<comment type="interaction">
    <interactant intactId="EBI-11959885">
        <id>Q07627</id>
    </interactant>
    <interactant intactId="EBI-1045459">
        <id>O95863</id>
        <label>SNAI1</label>
    </interactant>
    <organismsDiffer>false</organismsDiffer>
    <experiments>3</experiments>
</comment>
<comment type="interaction">
    <interactant intactId="EBI-11959885">
        <id>Q07627</id>
    </interactant>
    <interactant intactId="EBI-298169">
        <id>Q96RF0</id>
        <label>SNX18</label>
    </interactant>
    <organismsDiffer>false</organismsDiffer>
    <experiments>3</experiments>
</comment>
<comment type="interaction">
    <interactant intactId="EBI-11959885">
        <id>Q07627</id>
    </interactant>
    <interactant intactId="EBI-722584">
        <id>Q96E40</id>
        <label>SPACA9</label>
    </interactant>
    <organismsDiffer>false</organismsDiffer>
    <experiments>3</experiments>
</comment>
<comment type="interaction">
    <interactant intactId="EBI-11959885">
        <id>Q07627</id>
    </interactant>
    <interactant intactId="EBI-3866665">
        <id>O43609</id>
        <label>SPRY1</label>
    </interactant>
    <organismsDiffer>false</organismsDiffer>
    <experiments>3</experiments>
</comment>
<comment type="interaction">
    <interactant intactId="EBI-11959885">
        <id>Q07627</id>
    </interactant>
    <interactant intactId="EBI-749295">
        <id>O75716</id>
        <label>STK16</label>
    </interactant>
    <organismsDiffer>false</organismsDiffer>
    <experiments>3</experiments>
</comment>
<comment type="interaction">
    <interactant intactId="EBI-11959885">
        <id>Q07627</id>
    </interactant>
    <interactant intactId="EBI-11955057">
        <id>Q8N8B7-2</id>
        <label>TCEANC</label>
    </interactant>
    <organismsDiffer>false</organismsDiffer>
    <experiments>3</experiments>
</comment>
<comment type="interaction">
    <interactant intactId="EBI-11959885">
        <id>Q07627</id>
    </interactant>
    <interactant intactId="EBI-11952651">
        <id>Q7Z6R9</id>
        <label>TFAP2D</label>
    </interactant>
    <organismsDiffer>false</organismsDiffer>
    <experiments>3</experiments>
</comment>
<comment type="interaction">
    <interactant intactId="EBI-11959885">
        <id>Q07627</id>
    </interactant>
    <interactant intactId="EBI-779636">
        <id>P01137</id>
        <label>TGFB1</label>
    </interactant>
    <organismsDiffer>false</organismsDiffer>
    <experiments>3</experiments>
</comment>
<comment type="interaction">
    <interactant intactId="EBI-11959885">
        <id>Q07627</id>
    </interactant>
    <interactant intactId="EBI-11997340">
        <id>P0DTL5</id>
        <label>TMEM276</label>
    </interactant>
    <organismsDiffer>false</organismsDiffer>
    <experiments>3</experiments>
</comment>
<comment type="interaction">
    <interactant intactId="EBI-11959885">
        <id>Q07627</id>
    </interactant>
    <interactant intactId="EBI-12039775">
        <id>Q05952</id>
        <label>TNP2</label>
    </interactant>
    <organismsDiffer>false</organismsDiffer>
    <experiments>3</experiments>
</comment>
<comment type="interaction">
    <interactant intactId="EBI-11959885">
        <id>Q07627</id>
    </interactant>
    <interactant intactId="EBI-1049298">
        <id>P43897</id>
        <label>TSFM</label>
    </interactant>
    <organismsDiffer>false</organismsDiffer>
    <experiments>3</experiments>
</comment>
<comment type="interaction">
    <interactant intactId="EBI-11959885">
        <id>Q07627</id>
    </interactant>
    <interactant intactId="EBI-10249550">
        <id>Q6EMK4</id>
        <label>VASN</label>
    </interactant>
    <organismsDiffer>false</organismsDiffer>
    <experiments>3</experiments>
</comment>
<comment type="interaction">
    <interactant intactId="EBI-11959885">
        <id>Q07627</id>
    </interactant>
    <interactant intactId="EBI-11957216">
        <id>A8MV65-2</id>
        <label>VGLL3</label>
    </interactant>
    <organismsDiffer>false</organismsDiffer>
    <experiments>3</experiments>
</comment>
<comment type="interaction">
    <interactant intactId="EBI-11959885">
        <id>Q07627</id>
    </interactant>
    <interactant intactId="EBI-4311759">
        <id>Q8IW00</id>
        <label>VSTM4</label>
    </interactant>
    <organismsDiffer>false</organismsDiffer>
    <experiments>3</experiments>
</comment>
<comment type="interaction">
    <interactant intactId="EBI-11959885">
        <id>Q07627</id>
    </interactant>
    <interactant intactId="EBI-8058160">
        <id>O96014</id>
        <label>WNT11</label>
    </interactant>
    <organismsDiffer>false</organismsDiffer>
    <experiments>3</experiments>
</comment>
<comment type="interaction">
    <interactant intactId="EBI-11959885">
        <id>Q07627</id>
    </interactant>
    <interactant intactId="EBI-744864">
        <id>P10074</id>
        <label>ZBTB48</label>
    </interactant>
    <organismsDiffer>false</organismsDiffer>
    <experiments>3</experiments>
</comment>
<comment type="interaction">
    <interactant intactId="EBI-11959885">
        <id>Q07627</id>
    </interactant>
    <interactant intactId="EBI-395708">
        <id>Q96C00</id>
        <label>ZBTB9</label>
    </interactant>
    <organismsDiffer>false</organismsDiffer>
    <experiments>3</experiments>
</comment>
<comment type="interaction">
    <interactant intactId="EBI-11959885">
        <id>Q07627</id>
    </interactant>
    <interactant intactId="EBI-2818796">
        <id>Q8WTX9</id>
        <label>ZDHHC1</label>
    </interactant>
    <organismsDiffer>false</organismsDiffer>
    <experiments>3</experiments>
</comment>
<comment type="interaction">
    <interactant intactId="EBI-11959885">
        <id>Q07627</id>
    </interactant>
    <interactant intactId="EBI-2555767">
        <id>Q15973</id>
        <label>ZNF124</label>
    </interactant>
    <organismsDiffer>false</organismsDiffer>
    <experiments>3</experiments>
</comment>
<comment type="interaction">
    <interactant intactId="EBI-11959885">
        <id>Q07627</id>
    </interactant>
    <interactant intactId="EBI-373456">
        <id>Q9Y3S2</id>
        <label>ZNF330</label>
    </interactant>
    <organismsDiffer>false</organismsDiffer>
    <experiments>3</experiments>
</comment>
<comment type="interaction">
    <interactant intactId="EBI-11959885">
        <id>Q07627</id>
    </interactant>
    <interactant intactId="EBI-347633">
        <id>Q9H9D4</id>
        <label>ZNF408</label>
    </interactant>
    <organismsDiffer>false</organismsDiffer>
    <experiments>3</experiments>
</comment>
<comment type="interaction">
    <interactant intactId="EBI-11959885">
        <id>Q07627</id>
    </interactant>
    <interactant intactId="EBI-747580">
        <id>Q8NDP4</id>
        <label>ZNF439</label>
    </interactant>
    <organismsDiffer>false</organismsDiffer>
    <experiments>3</experiments>
</comment>
<comment type="interaction">
    <interactant intactId="EBI-11959885">
        <id>Q07627</id>
    </interactant>
    <interactant intactId="EBI-726439">
        <id>Q8IYI8</id>
        <label>ZNF440</label>
    </interactant>
    <organismsDiffer>false</organismsDiffer>
    <experiments>3</experiments>
</comment>
<comment type="interaction">
    <interactant intactId="EBI-11959885">
        <id>Q07627</id>
    </interactant>
    <interactant intactId="EBI-740232">
        <id>Q9NWS9-2</id>
        <label>ZNF446</label>
    </interactant>
    <organismsDiffer>false</organismsDiffer>
    <experiments>3</experiments>
</comment>
<comment type="interaction">
    <interactant intactId="EBI-11959885">
        <id>Q07627</id>
    </interactant>
    <interactant intactId="EBI-12019860">
        <id>Q8N8L2</id>
        <label>ZNF491</label>
    </interactant>
    <organismsDiffer>false</organismsDiffer>
    <experiments>3</experiments>
</comment>
<comment type="interaction">
    <interactant intactId="EBI-11959885">
        <id>Q07627</id>
    </interactant>
    <interactant intactId="EBI-10486136">
        <id>Q6ZNH5</id>
        <label>ZNF497</label>
    </interactant>
    <organismsDiffer>false</organismsDiffer>
    <experiments>3</experiments>
</comment>
<comment type="interaction">
    <interactant intactId="EBI-11959885">
        <id>Q07627</id>
    </interactant>
    <interactant intactId="EBI-10283126">
        <id>Q96C55</id>
        <label>ZNF524</label>
    </interactant>
    <organismsDiffer>false</organismsDiffer>
    <experiments>3</experiments>
</comment>
<comment type="interaction">
    <interactant intactId="EBI-11959885">
        <id>Q07627</id>
    </interactant>
    <interactant intactId="EBI-745520">
        <id>Q9P0T4</id>
        <label>ZNF581</label>
    </interactant>
    <organismsDiffer>false</organismsDiffer>
    <experiments>3</experiments>
</comment>
<comment type="interaction">
    <interactant intactId="EBI-11959885">
        <id>Q07627</id>
    </interactant>
    <interactant intactId="EBI-6427977">
        <id>Q96SQ5</id>
        <label>ZNF587</label>
    </interactant>
    <organismsDiffer>false</organismsDiffer>
    <experiments>3</experiments>
</comment>
<comment type="interaction">
    <interactant intactId="EBI-11959885">
        <id>Q07627</id>
    </interactant>
    <interactant intactId="EBI-11985915">
        <id>Q5T619</id>
        <label>ZNF648</label>
    </interactant>
    <organismsDiffer>false</organismsDiffer>
    <experiments>3</experiments>
</comment>
<comment type="interaction">
    <interactant intactId="EBI-11959885">
        <id>Q07627</id>
    </interactant>
    <interactant intactId="EBI-12006574">
        <id>Q96BR6</id>
        <label>ZNF669</label>
    </interactant>
    <organismsDiffer>false</organismsDiffer>
    <experiments>3</experiments>
</comment>
<comment type="interaction">
    <interactant intactId="EBI-11959885">
        <id>Q07627</id>
    </interactant>
    <interactant intactId="EBI-11090299">
        <id>Q9H7X3</id>
        <label>ZNF696</label>
    </interactant>
    <organismsDiffer>false</organismsDiffer>
    <experiments>3</experiments>
</comment>
<comment type="interaction">
    <interactant intactId="EBI-11959885">
        <id>Q07627</id>
    </interactant>
    <interactant intactId="EBI-10265203">
        <id>Q8N393</id>
        <label>ZNF786</label>
    </interactant>
    <organismsDiffer>false</organismsDiffer>
    <experiments>3</experiments>
</comment>
<comment type="interaction">
    <interactant intactId="EBI-11959885">
        <id>Q07627</id>
    </interactant>
    <interactant intactId="EBI-11962574">
        <id>Q96EG3</id>
        <label>ZNF837</label>
    </interactant>
    <organismsDiffer>false</organismsDiffer>
    <experiments>3</experiments>
</comment>
<comment type="tissue specificity">
    <text evidence="2">Expressed in the middle/upper portions of the hair cortex, in the region termed the keratogenous zone.</text>
</comment>
<comment type="similarity">
    <text evidence="5">Belongs to the KRTAP type 1 family.</text>
</comment>
<reference key="1">
    <citation type="journal article" date="1992" name="Mol. Biol. (Mosk.)">
        <title>Cloning and structural characterization of human hair sulfur-rich keratin genes.</title>
        <authorList>
            <person name="Zhumabaeva B.D."/>
            <person name="Gening L.V."/>
            <person name="Gazaryan K.G."/>
        </authorList>
    </citation>
    <scope>NUCLEOTIDE SEQUENCE [GENOMIC DNA]</scope>
</reference>
<reference key="2">
    <citation type="journal article" date="2001" name="J. Biol. Chem.">
        <title>Characterization of a cluster of human high/ultrahigh sulfur keratin-associated protein genes embedded in the type I keratin gene domain on chromosome 17q12-21.</title>
        <authorList>
            <person name="Rogers M.A."/>
            <person name="Langbein L."/>
            <person name="Winter H."/>
            <person name="Ehmann C."/>
            <person name="Praetzel S."/>
            <person name="Korn B."/>
            <person name="Schweizer J."/>
        </authorList>
    </citation>
    <scope>NUCLEOTIDE SEQUENCE [MRNA]</scope>
    <scope>TISSUE SPECIFICITY</scope>
    <source>
        <tissue>Scalp</tissue>
    </source>
</reference>
<reference key="3">
    <citation type="submission" date="2000-12" db="EMBL/GenBank/DDBJ databases">
        <title>Isolation of KAP1.1.</title>
        <authorList>
            <person name="Aoki N."/>
            <person name="Shimomura Y."/>
        </authorList>
    </citation>
    <scope>NUCLEOTIDE SEQUENCE [MRNA]</scope>
</reference>
<reference key="4">
    <citation type="journal article" date="2002" name="J. Invest. Dermatol.">
        <title>hKAP1.6 and hKAP1.7, two novel human high sulfur keratin-associated proteins are expressed in the hair follicle cortex.</title>
        <authorList>
            <person name="Shimomura Y."/>
            <person name="Aoki N."/>
            <person name="Rogers M.A."/>
            <person name="Langbein L."/>
            <person name="Schweizer J."/>
            <person name="Ito M."/>
        </authorList>
    </citation>
    <scope>NUCLEOTIDE SEQUENCE [MRNA]</scope>
    <scope>VARIANTS 12-PRO--PRO-58 DELINS ARG AND 19-THR--GLY-110 DEL</scope>
</reference>
<reference key="5">
    <citation type="journal article" date="2006" name="Nature">
        <title>DNA sequence of human chromosome 17 and analysis of rearrangement in the human lineage.</title>
        <authorList>
            <person name="Zody M.C."/>
            <person name="Garber M."/>
            <person name="Adams D.J."/>
            <person name="Sharpe T."/>
            <person name="Harrow J."/>
            <person name="Lupski J.R."/>
            <person name="Nicholson C."/>
            <person name="Searle S.M."/>
            <person name="Wilming L."/>
            <person name="Young S.K."/>
            <person name="Abouelleil A."/>
            <person name="Allen N.R."/>
            <person name="Bi W."/>
            <person name="Bloom T."/>
            <person name="Borowsky M.L."/>
            <person name="Bugalter B.E."/>
            <person name="Butler J."/>
            <person name="Chang J.L."/>
            <person name="Chen C.-K."/>
            <person name="Cook A."/>
            <person name="Corum B."/>
            <person name="Cuomo C.A."/>
            <person name="de Jong P.J."/>
            <person name="DeCaprio D."/>
            <person name="Dewar K."/>
            <person name="FitzGerald M."/>
            <person name="Gilbert J."/>
            <person name="Gibson R."/>
            <person name="Gnerre S."/>
            <person name="Goldstein S."/>
            <person name="Grafham D.V."/>
            <person name="Grocock R."/>
            <person name="Hafez N."/>
            <person name="Hagopian D.S."/>
            <person name="Hart E."/>
            <person name="Norman C.H."/>
            <person name="Humphray S."/>
            <person name="Jaffe D.B."/>
            <person name="Jones M."/>
            <person name="Kamal M."/>
            <person name="Khodiyar V.K."/>
            <person name="LaButti K."/>
            <person name="Laird G."/>
            <person name="Lehoczky J."/>
            <person name="Liu X."/>
            <person name="Lokyitsang T."/>
            <person name="Loveland J."/>
            <person name="Lui A."/>
            <person name="Macdonald P."/>
            <person name="Major J.E."/>
            <person name="Matthews L."/>
            <person name="Mauceli E."/>
            <person name="McCarroll S.A."/>
            <person name="Mihalev A.H."/>
            <person name="Mudge J."/>
            <person name="Nguyen C."/>
            <person name="Nicol R."/>
            <person name="O'Leary S.B."/>
            <person name="Osoegawa K."/>
            <person name="Schwartz D.C."/>
            <person name="Shaw-Smith C."/>
            <person name="Stankiewicz P."/>
            <person name="Steward C."/>
            <person name="Swarbreck D."/>
            <person name="Venkataraman V."/>
            <person name="Whittaker C.A."/>
            <person name="Yang X."/>
            <person name="Zimmer A.R."/>
            <person name="Bradley A."/>
            <person name="Hubbard T."/>
            <person name="Birren B.W."/>
            <person name="Rogers J."/>
            <person name="Lander E.S."/>
            <person name="Nusbaum C."/>
        </authorList>
    </citation>
    <scope>NUCLEOTIDE SEQUENCE [LARGE SCALE GENOMIC DNA]</scope>
</reference>
<reference key="6">
    <citation type="submission" date="2005-07" db="EMBL/GenBank/DDBJ databases">
        <authorList>
            <person name="Mural R.J."/>
            <person name="Istrail S."/>
            <person name="Sutton G.G."/>
            <person name="Florea L."/>
            <person name="Halpern A.L."/>
            <person name="Mobarry C.M."/>
            <person name="Lippert R."/>
            <person name="Walenz B."/>
            <person name="Shatkay H."/>
            <person name="Dew I."/>
            <person name="Miller J.R."/>
            <person name="Flanigan M.J."/>
            <person name="Edwards N.J."/>
            <person name="Bolanos R."/>
            <person name="Fasulo D."/>
            <person name="Halldorsson B.V."/>
            <person name="Hannenhalli S."/>
            <person name="Turner R."/>
            <person name="Yooseph S."/>
            <person name="Lu F."/>
            <person name="Nusskern D.R."/>
            <person name="Shue B.C."/>
            <person name="Zheng X.H."/>
            <person name="Zhong F."/>
            <person name="Delcher A.L."/>
            <person name="Huson D.H."/>
            <person name="Kravitz S.A."/>
            <person name="Mouchard L."/>
            <person name="Reinert K."/>
            <person name="Remington K.A."/>
            <person name="Clark A.G."/>
            <person name="Waterman M.S."/>
            <person name="Eichler E.E."/>
            <person name="Adams M.D."/>
            <person name="Hunkapiller M.W."/>
            <person name="Myers E.W."/>
            <person name="Venter J.C."/>
        </authorList>
    </citation>
    <scope>NUCLEOTIDE SEQUENCE [LARGE SCALE GENOMIC DNA]</scope>
</reference>
<reference key="7">
    <citation type="journal article" date="2004" name="Genome Res.">
        <title>The status, quality, and expansion of the NIH full-length cDNA project: the Mammalian Gene Collection (MGC).</title>
        <authorList>
            <consortium name="The MGC Project Team"/>
        </authorList>
    </citation>
    <scope>NUCLEOTIDE SEQUENCE [LARGE SCALE MRNA]</scope>
</reference>
<reference key="8">
    <citation type="journal article" date="2002" name="J. Biol. Chem.">
        <title>Polymorphisms in the human high sulfur hair keratin-associated protein 1, KAP1, gene family.</title>
        <authorList>
            <person name="Shimomura Y."/>
            <person name="Aoki N."/>
            <person name="Schweizer J."/>
            <person name="Langbein L."/>
            <person name="Rogers M.A."/>
            <person name="Winter H."/>
            <person name="Ito M."/>
        </authorList>
    </citation>
    <scope>VARIANT 12-PRO--PRO-58 DELINS ARG</scope>
</reference>
<feature type="chain" id="PRO_0000223901" description="Keratin-associated protein 1-1">
    <location>
        <begin position="1"/>
        <end position="177"/>
    </location>
</feature>
<feature type="sequence variant" id="VAR_025348" description="In allele KAP1.6." evidence="3 4">
    <original>PSCSTSGTCGSSCCQPSCCETSSCQPRCCETSCCQPSCCQTSFCGFP</original>
    <variation>R</variation>
    <location>
        <begin position="12"/>
        <end position="58"/>
    </location>
</feature>
<feature type="sequence variant" id="VAR_025353" description="In allele KAP1.7." evidence="3">
    <location>
        <begin position="19"/>
        <end position="110"/>
    </location>
</feature>
<name>KRA11_HUMAN</name>
<organism>
    <name type="scientific">Homo sapiens</name>
    <name type="common">Human</name>
    <dbReference type="NCBI Taxonomy" id="9606"/>
    <lineage>
        <taxon>Eukaryota</taxon>
        <taxon>Metazoa</taxon>
        <taxon>Chordata</taxon>
        <taxon>Craniata</taxon>
        <taxon>Vertebrata</taxon>
        <taxon>Euteleostomi</taxon>
        <taxon>Mammalia</taxon>
        <taxon>Eutheria</taxon>
        <taxon>Euarchontoglires</taxon>
        <taxon>Primates</taxon>
        <taxon>Haplorrhini</taxon>
        <taxon>Catarrhini</taxon>
        <taxon>Hominidae</taxon>
        <taxon>Homo</taxon>
    </lineage>
</organism>
<sequence>MACCQTSFCGFPSCSTSGTCGSSCCQPSCCETSSCQPRCCETSCCQPSCCQTSFCGFPSFSTGGTCDSSCCQPSCCETSCCQPSCYQTSSCGTGCGIGGGIGYGQEGSSGAVSTRIRWCRPDCRVEGTCLPPCCVVSCTPPSCCQLHHAEASCCRPSYCGQSCCRPVCCCYCSEPTC</sequence>
<evidence type="ECO:0000250" key="1"/>
<evidence type="ECO:0000269" key="2">
    <source>
    </source>
</evidence>
<evidence type="ECO:0000269" key="3">
    <source>
    </source>
</evidence>
<evidence type="ECO:0000269" key="4">
    <source>
    </source>
</evidence>
<evidence type="ECO:0000305" key="5"/>
<accession>Q07627</accession>
<accession>A6NC32</accession>
<accession>Q96S60</accession>
<accession>Q96S67</accession>
<gene>
    <name type="primary">KRTAP1-1</name>
    <name type="synonym">B2A</name>
    <name type="synonym">KAP1.1</name>
    <name type="synonym">KAP1.6</name>
    <name type="synonym">KAP1.7</name>
    <name type="synonym">KRTAP1.1</name>
</gene>
<proteinExistence type="evidence at protein level"/>
<keyword id="KW-0416">Keratin</keyword>
<keyword id="KW-1267">Proteomics identification</keyword>
<keyword id="KW-1185">Reference proteome</keyword>
<keyword id="KW-0677">Repeat</keyword>